<evidence type="ECO:0000255" key="1">
    <source>
        <dbReference type="HAMAP-Rule" id="MF_00558"/>
    </source>
</evidence>
<proteinExistence type="inferred from homology"/>
<dbReference type="EC" id="6.2.1.5" evidence="1"/>
<dbReference type="EMBL" id="CP000560">
    <property type="protein sequence ID" value="ABS73955.1"/>
    <property type="molecule type" value="Genomic_DNA"/>
</dbReference>
<dbReference type="RefSeq" id="WP_003154283.1">
    <property type="nucleotide sequence ID" value="NC_009725.2"/>
</dbReference>
<dbReference type="SMR" id="A7Z4M9"/>
<dbReference type="GeneID" id="93080725"/>
<dbReference type="KEGG" id="bay:RBAM_015920"/>
<dbReference type="HOGENOM" id="CLU_037430_0_2_9"/>
<dbReference type="UniPathway" id="UPA00223">
    <property type="reaction ID" value="UER00999"/>
</dbReference>
<dbReference type="Proteomes" id="UP000001120">
    <property type="component" value="Chromosome"/>
</dbReference>
<dbReference type="GO" id="GO:0005829">
    <property type="term" value="C:cytosol"/>
    <property type="evidence" value="ECO:0007669"/>
    <property type="project" value="TreeGrafter"/>
</dbReference>
<dbReference type="GO" id="GO:0042709">
    <property type="term" value="C:succinate-CoA ligase complex"/>
    <property type="evidence" value="ECO:0007669"/>
    <property type="project" value="TreeGrafter"/>
</dbReference>
<dbReference type="GO" id="GO:0005524">
    <property type="term" value="F:ATP binding"/>
    <property type="evidence" value="ECO:0007669"/>
    <property type="project" value="UniProtKB-UniRule"/>
</dbReference>
<dbReference type="GO" id="GO:0000287">
    <property type="term" value="F:magnesium ion binding"/>
    <property type="evidence" value="ECO:0007669"/>
    <property type="project" value="UniProtKB-UniRule"/>
</dbReference>
<dbReference type="GO" id="GO:0004775">
    <property type="term" value="F:succinate-CoA ligase (ADP-forming) activity"/>
    <property type="evidence" value="ECO:0007669"/>
    <property type="project" value="UniProtKB-UniRule"/>
</dbReference>
<dbReference type="GO" id="GO:0004776">
    <property type="term" value="F:succinate-CoA ligase (GDP-forming) activity"/>
    <property type="evidence" value="ECO:0007669"/>
    <property type="project" value="RHEA"/>
</dbReference>
<dbReference type="GO" id="GO:0006104">
    <property type="term" value="P:succinyl-CoA metabolic process"/>
    <property type="evidence" value="ECO:0007669"/>
    <property type="project" value="TreeGrafter"/>
</dbReference>
<dbReference type="GO" id="GO:0006099">
    <property type="term" value="P:tricarboxylic acid cycle"/>
    <property type="evidence" value="ECO:0007669"/>
    <property type="project" value="UniProtKB-UniRule"/>
</dbReference>
<dbReference type="FunFam" id="3.30.1490.20:FF:000002">
    <property type="entry name" value="Succinate--CoA ligase [ADP-forming] subunit beta"/>
    <property type="match status" value="1"/>
</dbReference>
<dbReference type="FunFam" id="3.30.470.20:FF:000002">
    <property type="entry name" value="Succinate--CoA ligase [ADP-forming] subunit beta"/>
    <property type="match status" value="1"/>
</dbReference>
<dbReference type="FunFam" id="3.40.50.261:FF:000001">
    <property type="entry name" value="Succinate--CoA ligase [ADP-forming] subunit beta"/>
    <property type="match status" value="1"/>
</dbReference>
<dbReference type="Gene3D" id="3.30.1490.20">
    <property type="entry name" value="ATP-grasp fold, A domain"/>
    <property type="match status" value="1"/>
</dbReference>
<dbReference type="Gene3D" id="3.30.470.20">
    <property type="entry name" value="ATP-grasp fold, B domain"/>
    <property type="match status" value="1"/>
</dbReference>
<dbReference type="Gene3D" id="3.40.50.261">
    <property type="entry name" value="Succinyl-CoA synthetase domains"/>
    <property type="match status" value="1"/>
</dbReference>
<dbReference type="HAMAP" id="MF_00558">
    <property type="entry name" value="Succ_CoA_beta"/>
    <property type="match status" value="1"/>
</dbReference>
<dbReference type="InterPro" id="IPR011761">
    <property type="entry name" value="ATP-grasp"/>
</dbReference>
<dbReference type="InterPro" id="IPR013650">
    <property type="entry name" value="ATP-grasp_succ-CoA_synth-type"/>
</dbReference>
<dbReference type="InterPro" id="IPR013815">
    <property type="entry name" value="ATP_grasp_subdomain_1"/>
</dbReference>
<dbReference type="InterPro" id="IPR017866">
    <property type="entry name" value="Succ-CoA_synthase_bsu_CS"/>
</dbReference>
<dbReference type="InterPro" id="IPR005811">
    <property type="entry name" value="SUCC_ACL_C"/>
</dbReference>
<dbReference type="InterPro" id="IPR005809">
    <property type="entry name" value="Succ_CoA_ligase-like_bsu"/>
</dbReference>
<dbReference type="InterPro" id="IPR016102">
    <property type="entry name" value="Succinyl-CoA_synth-like"/>
</dbReference>
<dbReference type="NCBIfam" id="NF001913">
    <property type="entry name" value="PRK00696.1"/>
    <property type="match status" value="1"/>
</dbReference>
<dbReference type="NCBIfam" id="TIGR01016">
    <property type="entry name" value="sucCoAbeta"/>
    <property type="match status" value="1"/>
</dbReference>
<dbReference type="PANTHER" id="PTHR11815:SF10">
    <property type="entry name" value="SUCCINATE--COA LIGASE [GDP-FORMING] SUBUNIT BETA, MITOCHONDRIAL"/>
    <property type="match status" value="1"/>
</dbReference>
<dbReference type="PANTHER" id="PTHR11815">
    <property type="entry name" value="SUCCINYL-COA SYNTHETASE BETA CHAIN"/>
    <property type="match status" value="1"/>
</dbReference>
<dbReference type="Pfam" id="PF08442">
    <property type="entry name" value="ATP-grasp_2"/>
    <property type="match status" value="1"/>
</dbReference>
<dbReference type="Pfam" id="PF00549">
    <property type="entry name" value="Ligase_CoA"/>
    <property type="match status" value="1"/>
</dbReference>
<dbReference type="PIRSF" id="PIRSF001554">
    <property type="entry name" value="SucCS_beta"/>
    <property type="match status" value="1"/>
</dbReference>
<dbReference type="SUPFAM" id="SSF56059">
    <property type="entry name" value="Glutathione synthetase ATP-binding domain-like"/>
    <property type="match status" value="1"/>
</dbReference>
<dbReference type="SUPFAM" id="SSF52210">
    <property type="entry name" value="Succinyl-CoA synthetase domains"/>
    <property type="match status" value="1"/>
</dbReference>
<dbReference type="PROSITE" id="PS50975">
    <property type="entry name" value="ATP_GRASP"/>
    <property type="match status" value="1"/>
</dbReference>
<dbReference type="PROSITE" id="PS01217">
    <property type="entry name" value="SUCCINYL_COA_LIG_3"/>
    <property type="match status" value="1"/>
</dbReference>
<keyword id="KW-0067">ATP-binding</keyword>
<keyword id="KW-0436">Ligase</keyword>
<keyword id="KW-0460">Magnesium</keyword>
<keyword id="KW-0479">Metal-binding</keyword>
<keyword id="KW-0547">Nucleotide-binding</keyword>
<keyword id="KW-0816">Tricarboxylic acid cycle</keyword>
<feature type="chain" id="PRO_1000082004" description="Succinate--CoA ligase [ADP-forming] subunit beta">
    <location>
        <begin position="1"/>
        <end position="385"/>
    </location>
</feature>
<feature type="domain" description="ATP-grasp" evidence="1">
    <location>
        <begin position="9"/>
        <end position="244"/>
    </location>
</feature>
<feature type="binding site" evidence="1">
    <location>
        <position position="46"/>
    </location>
    <ligand>
        <name>ATP</name>
        <dbReference type="ChEBI" id="CHEBI:30616"/>
    </ligand>
</feature>
<feature type="binding site" evidence="1">
    <location>
        <begin position="53"/>
        <end position="55"/>
    </location>
    <ligand>
        <name>ATP</name>
        <dbReference type="ChEBI" id="CHEBI:30616"/>
    </ligand>
</feature>
<feature type="binding site" evidence="1">
    <location>
        <position position="99"/>
    </location>
    <ligand>
        <name>ATP</name>
        <dbReference type="ChEBI" id="CHEBI:30616"/>
    </ligand>
</feature>
<feature type="binding site" evidence="1">
    <location>
        <position position="102"/>
    </location>
    <ligand>
        <name>ATP</name>
        <dbReference type="ChEBI" id="CHEBI:30616"/>
    </ligand>
</feature>
<feature type="binding site" evidence="1">
    <location>
        <position position="107"/>
    </location>
    <ligand>
        <name>ATP</name>
        <dbReference type="ChEBI" id="CHEBI:30616"/>
    </ligand>
</feature>
<feature type="binding site" evidence="1">
    <location>
        <position position="199"/>
    </location>
    <ligand>
        <name>Mg(2+)</name>
        <dbReference type="ChEBI" id="CHEBI:18420"/>
    </ligand>
</feature>
<feature type="binding site" evidence="1">
    <location>
        <position position="213"/>
    </location>
    <ligand>
        <name>Mg(2+)</name>
        <dbReference type="ChEBI" id="CHEBI:18420"/>
    </ligand>
</feature>
<feature type="binding site" evidence="1">
    <location>
        <position position="264"/>
    </location>
    <ligand>
        <name>substrate</name>
        <note>ligand shared with subunit alpha</note>
    </ligand>
</feature>
<feature type="binding site" evidence="1">
    <location>
        <begin position="321"/>
        <end position="323"/>
    </location>
    <ligand>
        <name>substrate</name>
        <note>ligand shared with subunit alpha</note>
    </ligand>
</feature>
<accession>A7Z4M9</accession>
<organism>
    <name type="scientific">Bacillus velezensis (strain DSM 23117 / BGSC 10A6 / LMG 26770 / FZB42)</name>
    <name type="common">Bacillus amyloliquefaciens subsp. plantarum</name>
    <dbReference type="NCBI Taxonomy" id="326423"/>
    <lineage>
        <taxon>Bacteria</taxon>
        <taxon>Bacillati</taxon>
        <taxon>Bacillota</taxon>
        <taxon>Bacilli</taxon>
        <taxon>Bacillales</taxon>
        <taxon>Bacillaceae</taxon>
        <taxon>Bacillus</taxon>
        <taxon>Bacillus amyloliquefaciens group</taxon>
    </lineage>
</organism>
<sequence length="385" mass="41514">MNIHEYQGKEVLRKYGVSVPEGKVAFTAEEAVEKAESLSSSVYVVKAQIHAGGRGKAGGVKIAKTKDEVKEYAEELLGKTLVTHQTGPDGQVIKRLLIEEGCDIKKEYYVGLVLDRATSRIVLMASEEGGTEIEEVAEKTPEKIKKAVIDPAVGLQGYQAREIAFAINIPKELVGKAAKFMLGLYKAFVEKDCSIAEINPLVVTGDGNVMALDAKLNFDSNALYRQKDIMEYRDLDEEDPKEIEASKYDLSYISLDGNIGCMVNGAGLAMSTMDIIKHYGGEPANFLDVGGGATAEKVTEAFKIILSDQNVKGIFVNIFGGIMKCDVIAEGVVEATRQVGLTLPLVVRLEGTNVDLGKKILNESGLNITSAESMADGAQKIVSLV</sequence>
<protein>
    <recommendedName>
        <fullName evidence="1">Succinate--CoA ligase [ADP-forming] subunit beta</fullName>
        <ecNumber evidence="1">6.2.1.5</ecNumber>
    </recommendedName>
    <alternativeName>
        <fullName evidence="1">Succinyl-CoA synthetase subunit beta</fullName>
        <shortName evidence="1">SCS-beta</shortName>
    </alternativeName>
</protein>
<reference key="1">
    <citation type="journal article" date="2007" name="Nat. Biotechnol.">
        <title>Comparative analysis of the complete genome sequence of the plant growth-promoting bacterium Bacillus amyloliquefaciens FZB42.</title>
        <authorList>
            <person name="Chen X.H."/>
            <person name="Koumoutsi A."/>
            <person name="Scholz R."/>
            <person name="Eisenreich A."/>
            <person name="Schneider K."/>
            <person name="Heinemeyer I."/>
            <person name="Morgenstern B."/>
            <person name="Voss B."/>
            <person name="Hess W.R."/>
            <person name="Reva O."/>
            <person name="Junge H."/>
            <person name="Voigt B."/>
            <person name="Jungblut P.R."/>
            <person name="Vater J."/>
            <person name="Suessmuth R."/>
            <person name="Liesegang H."/>
            <person name="Strittmatter A."/>
            <person name="Gottschalk G."/>
            <person name="Borriss R."/>
        </authorList>
    </citation>
    <scope>NUCLEOTIDE SEQUENCE [LARGE SCALE GENOMIC DNA]</scope>
    <source>
        <strain>DSM 23117 / BGSC 10A6 / LMG 26770 / FZB42</strain>
    </source>
</reference>
<gene>
    <name evidence="1" type="primary">sucC</name>
    <name type="ordered locus">RBAM_015920</name>
</gene>
<name>SUCC_BACVZ</name>
<comment type="function">
    <text evidence="1">Succinyl-CoA synthetase functions in the citric acid cycle (TCA), coupling the hydrolysis of succinyl-CoA to the synthesis of either ATP or GTP and thus represents the only step of substrate-level phosphorylation in the TCA. The beta subunit provides nucleotide specificity of the enzyme and binds the substrate succinate, while the binding sites for coenzyme A and phosphate are found in the alpha subunit.</text>
</comment>
<comment type="catalytic activity">
    <reaction evidence="1">
        <text>succinate + ATP + CoA = succinyl-CoA + ADP + phosphate</text>
        <dbReference type="Rhea" id="RHEA:17661"/>
        <dbReference type="ChEBI" id="CHEBI:30031"/>
        <dbReference type="ChEBI" id="CHEBI:30616"/>
        <dbReference type="ChEBI" id="CHEBI:43474"/>
        <dbReference type="ChEBI" id="CHEBI:57287"/>
        <dbReference type="ChEBI" id="CHEBI:57292"/>
        <dbReference type="ChEBI" id="CHEBI:456216"/>
        <dbReference type="EC" id="6.2.1.5"/>
    </reaction>
    <physiologicalReaction direction="right-to-left" evidence="1">
        <dbReference type="Rhea" id="RHEA:17663"/>
    </physiologicalReaction>
</comment>
<comment type="catalytic activity">
    <reaction evidence="1">
        <text>GTP + succinate + CoA = succinyl-CoA + GDP + phosphate</text>
        <dbReference type="Rhea" id="RHEA:22120"/>
        <dbReference type="ChEBI" id="CHEBI:30031"/>
        <dbReference type="ChEBI" id="CHEBI:37565"/>
        <dbReference type="ChEBI" id="CHEBI:43474"/>
        <dbReference type="ChEBI" id="CHEBI:57287"/>
        <dbReference type="ChEBI" id="CHEBI:57292"/>
        <dbReference type="ChEBI" id="CHEBI:58189"/>
    </reaction>
    <physiologicalReaction direction="right-to-left" evidence="1">
        <dbReference type="Rhea" id="RHEA:22122"/>
    </physiologicalReaction>
</comment>
<comment type="cofactor">
    <cofactor evidence="1">
        <name>Mg(2+)</name>
        <dbReference type="ChEBI" id="CHEBI:18420"/>
    </cofactor>
    <text evidence="1">Binds 1 Mg(2+) ion per subunit.</text>
</comment>
<comment type="pathway">
    <text evidence="1">Carbohydrate metabolism; tricarboxylic acid cycle; succinate from succinyl-CoA (ligase route): step 1/1.</text>
</comment>
<comment type="subunit">
    <text evidence="1">Heterotetramer of two alpha and two beta subunits.</text>
</comment>
<comment type="similarity">
    <text evidence="1">Belongs to the succinate/malate CoA ligase beta subunit family.</text>
</comment>